<accession>A8FK16</accession>
<comment type="function">
    <text evidence="1">Catalyzes the ATP-dependent phosphorylation of N-acetyl-L-glutamate.</text>
</comment>
<comment type="catalytic activity">
    <reaction evidence="1">
        <text>N-acetyl-L-glutamate + ATP = N-acetyl-L-glutamyl 5-phosphate + ADP</text>
        <dbReference type="Rhea" id="RHEA:14629"/>
        <dbReference type="ChEBI" id="CHEBI:30616"/>
        <dbReference type="ChEBI" id="CHEBI:44337"/>
        <dbReference type="ChEBI" id="CHEBI:57936"/>
        <dbReference type="ChEBI" id="CHEBI:456216"/>
        <dbReference type="EC" id="2.7.2.8"/>
    </reaction>
</comment>
<comment type="pathway">
    <text evidence="1">Amino-acid biosynthesis; L-arginine biosynthesis; N(2)-acetyl-L-ornithine from L-glutamate: step 2/4.</text>
</comment>
<comment type="subcellular location">
    <subcellularLocation>
        <location evidence="1">Cytoplasm</location>
    </subcellularLocation>
</comment>
<comment type="similarity">
    <text evidence="1">Belongs to the acetylglutamate kinase family. ArgB subfamily.</text>
</comment>
<gene>
    <name evidence="1" type="primary">argB</name>
    <name type="ordered locus">C8J_0204</name>
</gene>
<proteinExistence type="inferred from homology"/>
<dbReference type="EC" id="2.7.2.8" evidence="1"/>
<dbReference type="EMBL" id="CP000814">
    <property type="protein sequence ID" value="ABV51803.1"/>
    <property type="molecule type" value="Genomic_DNA"/>
</dbReference>
<dbReference type="SMR" id="A8FK16"/>
<dbReference type="KEGG" id="cju:C8J_0204"/>
<dbReference type="HOGENOM" id="CLU_053680_0_0_7"/>
<dbReference type="UniPathway" id="UPA00068">
    <property type="reaction ID" value="UER00107"/>
</dbReference>
<dbReference type="GO" id="GO:0005737">
    <property type="term" value="C:cytoplasm"/>
    <property type="evidence" value="ECO:0007669"/>
    <property type="project" value="UniProtKB-SubCell"/>
</dbReference>
<dbReference type="GO" id="GO:0003991">
    <property type="term" value="F:acetylglutamate kinase activity"/>
    <property type="evidence" value="ECO:0007669"/>
    <property type="project" value="UniProtKB-UniRule"/>
</dbReference>
<dbReference type="GO" id="GO:0005524">
    <property type="term" value="F:ATP binding"/>
    <property type="evidence" value="ECO:0007669"/>
    <property type="project" value="UniProtKB-UniRule"/>
</dbReference>
<dbReference type="GO" id="GO:0042450">
    <property type="term" value="P:arginine biosynthetic process via ornithine"/>
    <property type="evidence" value="ECO:0007669"/>
    <property type="project" value="UniProtKB-UniRule"/>
</dbReference>
<dbReference type="GO" id="GO:0006526">
    <property type="term" value="P:L-arginine biosynthetic process"/>
    <property type="evidence" value="ECO:0007669"/>
    <property type="project" value="UniProtKB-UniPathway"/>
</dbReference>
<dbReference type="CDD" id="cd04250">
    <property type="entry name" value="AAK_NAGK-C"/>
    <property type="match status" value="1"/>
</dbReference>
<dbReference type="FunFam" id="3.40.1160.10:FF:000004">
    <property type="entry name" value="Acetylglutamate kinase"/>
    <property type="match status" value="1"/>
</dbReference>
<dbReference type="Gene3D" id="3.40.1160.10">
    <property type="entry name" value="Acetylglutamate kinase-like"/>
    <property type="match status" value="1"/>
</dbReference>
<dbReference type="HAMAP" id="MF_00082">
    <property type="entry name" value="ArgB"/>
    <property type="match status" value="1"/>
</dbReference>
<dbReference type="InterPro" id="IPR036393">
    <property type="entry name" value="AceGlu_kinase-like_sf"/>
</dbReference>
<dbReference type="InterPro" id="IPR004662">
    <property type="entry name" value="AcgluKinase_fam"/>
</dbReference>
<dbReference type="InterPro" id="IPR037528">
    <property type="entry name" value="ArgB"/>
</dbReference>
<dbReference type="InterPro" id="IPR001048">
    <property type="entry name" value="Asp/Glu/Uridylate_kinase"/>
</dbReference>
<dbReference type="InterPro" id="IPR001057">
    <property type="entry name" value="Glu/AcGlu_kinase"/>
</dbReference>
<dbReference type="InterPro" id="IPR041727">
    <property type="entry name" value="NAGK-C"/>
</dbReference>
<dbReference type="NCBIfam" id="TIGR00761">
    <property type="entry name" value="argB"/>
    <property type="match status" value="1"/>
</dbReference>
<dbReference type="PANTHER" id="PTHR23342">
    <property type="entry name" value="N-ACETYLGLUTAMATE SYNTHASE"/>
    <property type="match status" value="1"/>
</dbReference>
<dbReference type="PANTHER" id="PTHR23342:SF0">
    <property type="entry name" value="N-ACETYLGLUTAMATE SYNTHASE, MITOCHONDRIAL"/>
    <property type="match status" value="1"/>
</dbReference>
<dbReference type="Pfam" id="PF00696">
    <property type="entry name" value="AA_kinase"/>
    <property type="match status" value="1"/>
</dbReference>
<dbReference type="PIRSF" id="PIRSF000728">
    <property type="entry name" value="NAGK"/>
    <property type="match status" value="1"/>
</dbReference>
<dbReference type="PRINTS" id="PR00474">
    <property type="entry name" value="GLU5KINASE"/>
</dbReference>
<dbReference type="SUPFAM" id="SSF53633">
    <property type="entry name" value="Carbamate kinase-like"/>
    <property type="match status" value="1"/>
</dbReference>
<keyword id="KW-0028">Amino-acid biosynthesis</keyword>
<keyword id="KW-0055">Arginine biosynthesis</keyword>
<keyword id="KW-0067">ATP-binding</keyword>
<keyword id="KW-0963">Cytoplasm</keyword>
<keyword id="KW-0418">Kinase</keyword>
<keyword id="KW-0547">Nucleotide-binding</keyword>
<keyword id="KW-0808">Transferase</keyword>
<name>ARGB_CAMJ8</name>
<reference key="1">
    <citation type="journal article" date="2007" name="J. Bacteriol.">
        <title>The complete genome sequence of Campylobacter jejuni strain 81116 (NCTC11828).</title>
        <authorList>
            <person name="Pearson B.M."/>
            <person name="Gaskin D.J.H."/>
            <person name="Segers R.P.A.M."/>
            <person name="Wells J.M."/>
            <person name="Nuijten P.J.M."/>
            <person name="van Vliet A.H.M."/>
        </authorList>
    </citation>
    <scope>NUCLEOTIDE SEQUENCE [LARGE SCALE GENOMIC DNA]</scope>
    <source>
        <strain>81116 / NCTC 11828</strain>
    </source>
</reference>
<protein>
    <recommendedName>
        <fullName evidence="1">Acetylglutamate kinase</fullName>
        <ecNumber evidence="1">2.7.2.8</ecNumber>
    </recommendedName>
    <alternativeName>
        <fullName evidence="1">N-acetyl-L-glutamate 5-phosphotransferase</fullName>
    </alternativeName>
    <alternativeName>
        <fullName evidence="1">NAG kinase</fullName>
        <shortName evidence="1">NAGK</shortName>
    </alternativeName>
</protein>
<feature type="chain" id="PRO_1000071216" description="Acetylglutamate kinase">
    <location>
        <begin position="1"/>
        <end position="279"/>
    </location>
</feature>
<feature type="binding site" evidence="1">
    <location>
        <begin position="64"/>
        <end position="65"/>
    </location>
    <ligand>
        <name>substrate</name>
    </ligand>
</feature>
<feature type="binding site" evidence="1">
    <location>
        <position position="86"/>
    </location>
    <ligand>
        <name>substrate</name>
    </ligand>
</feature>
<feature type="binding site" evidence="1">
    <location>
        <position position="177"/>
    </location>
    <ligand>
        <name>substrate</name>
    </ligand>
</feature>
<feature type="site" description="Transition state stabilizer" evidence="1">
    <location>
        <position position="29"/>
    </location>
</feature>
<feature type="site" description="Transition state stabilizer" evidence="1">
    <location>
        <position position="238"/>
    </location>
</feature>
<sequence length="279" mass="30553">MQKYLEKANVLIEALPYIRKFNSKIILIKYGGSAMENEELKHCVMQDIALLKLVGLKPIIVHGGGKDISAMCEKLGVKSEFKNGLRVSDKATTEVASMVLNHINKNLVHSLQNLGVKAIGLCGKDGALLECVKKDENLAFVGTIQKVNSKILEELLEKDFLPIITPIGMDENFNTYNINADDAACSIAKALRAEKLAFLTDTAGLYEDFNDKNSLISKISLEQAKILAPKIEGGMHVKLKSCIDACENGVKKVHILDGRVKHSLLLEFFTDEGIGTLVG</sequence>
<evidence type="ECO:0000255" key="1">
    <source>
        <dbReference type="HAMAP-Rule" id="MF_00082"/>
    </source>
</evidence>
<organism>
    <name type="scientific">Campylobacter jejuni subsp. jejuni serotype O:6 (strain 81116 / NCTC 11828)</name>
    <dbReference type="NCBI Taxonomy" id="407148"/>
    <lineage>
        <taxon>Bacteria</taxon>
        <taxon>Pseudomonadati</taxon>
        <taxon>Campylobacterota</taxon>
        <taxon>Epsilonproteobacteria</taxon>
        <taxon>Campylobacterales</taxon>
        <taxon>Campylobacteraceae</taxon>
        <taxon>Campylobacter</taxon>
    </lineage>
</organism>